<sequence>MAMALAVGAPSEQRGNLPYNTLKDGPTVDSMKATTDGKNGQGESAFWDTCVHTVFREHCQRAPNSPAVNAWDGSFTYAELDSLSDAIASVLILSGVGPESIIPIYMQKSRWTTVAILGVLKSGGAFTLLDPSHPRSRVEEISKEIQARFILTSEKLSKQCLEMFSVLVVEHLSRACLPSPGQAGHTRSRPENAAYIAFTSGSTGKPKGIVIEHRSYCSGARSHLKVFGIDSTSRVLQFASYAFDVSIMETLSTLMAGGCLCVMSESERSDPNLFVVSYKNLRISHCFMTPSFARTVPWTECCNPPPTLIVGGELMRPSDARAYKEMGIRCMNAYGPAECSVNVSVQSRVEAAVDPRNIGYTTGATAWIISPENPEELMPTGTVGELLVEGPIVGRGYLNDPKATRQAFIDTPAWLRRHRKGTSYQHRVYRTGDLASLDSITGALLLHGRKDAQVKIRGQRVELPDIEHHLQLTLPNDNAEVIVEKVTFSDDGSEKLIAFVLVRPSNTDSVIGNTGDRLFLAPQSQIMEQFAISKKHLQTHLPSYMVPDIFIPISTLPQTASGKTDRKALRTRAAALSRRDVQCFLLSPAGGKRPPSTPKEATIRSLYSNVLNLPIDLIGMDDTFLRLGGDSLQAIRLVAAARAAGLILHAKDILSSQSTLAEQSKRAGLIQTIDRTWESSPPFALLHGPTRHAIVDLAQKQCRVPSNLIEDIYPCTALQEGMFITSLKHPGMYTGQIIFDIPDRMELPRLKAAWLSVVSENAALRTRIIETHEGLMQAVIVDDFVWEEETDEMLLSSDGEALEITKIGVPLVRFRYRPRHRQLMMTIHHSIWDGWSLRLVHEQLQRAYIGRDLLPSTSYRSFIQYTQELPGADEFWASELAGVNAPIFPTLPSGNYRPRVNASHRHVVRNLASTGKEEHTAATYIHLAWSLLVAHYTDADETVYGVTVNGRSADVPGIENIVGPTIATVPTRIRVNEEDTVEMALDHVQDALARMIPYEQAGLQRISRCSRDASEACRFQNLLIIEAPTDSDVDCEKNEAGNFSIIGGTTQTGMDYTAFSSYAMMLVFRTSANKSAISFDITYDAQVIGHDEVERMAHQFEHVLRHIYTLATGRIGDISFIGPRDIEQVQQWNSSMPPADNRFLQELIFAQCSRRPQASAIISWDGSWTYRELWAHSSFFARQLQRYGVTRGTPVAVCLDRSRWSIAVILGVLLARGTCVLIDLLAPRQRVRDILQIAGTGILVHSHATATLTSGLCPTVINVSFLAAQSDSSQPEFPFTLETWGGTPEDLAFIIFTSGSTGHPKGIEMPHRTLSTSISHHSAGMRVTSSSRVLHFSSYAFDVSIYEIFTTLAAGGTICVPSEFDRMNNLAGFIQDTQVNWAFLTPSTARSLNPADVPLLTTLVLGGEAVTHESVEVWAKGRSLINGYGPAEATICGVGNIPEAGWKSGVVGRIIGGLGWVTVPSDPNRLAAVGAVGELLLEGPFLARGYLNLPEVTKAAFIDPPSWRTRIPAPSPYSFLYRTGDLVRYQPDGSIQYVGRKDSRVKLRGQLVDLGAVEASVMRVYPAAGQVVADVLVSENTARLIAMVKLGPSVTENHDGPMFAAPDLVFNEAAASIQARLRAIVPAYMVPSMFIPLRHIPRTLTGKTDRRRLRDKILSLSHSDLQRYMMSSSTKTPMSDDNERRLQEIWAEVLQLPCEAIGREDSFLSLGGESLATMKMVALARRVGFMFAVTDVMNNTSLSTLARSRHLITEQAILTSSPSLSLPTIEGESLQEILRPLLNAGHIQGGNDIAAIHPVTAAQAFLVQRYPWSHFQFDLSGAVSPSKLQTACTALMARFTILRTVFVEHAGCLLQLVLREVPNRVHEITTNEPLDDFCNSVCQQQQDVCVVNSTTLPTLFTLVSNRQLNRHRLLLRLAHAQYDLTTIPLIVQSLADEYNRTLRSGFSADFGYYLSHHKRQNNDDRSHNFWKRYLSGSSMMSTNQTADPTTVQERVFHVTGSCIIIPTSHPPDITIATAVKAAVCLVLAARTGCTDIVIGQTVDARCSSADSTLDQIVGPCTNYIPYRLSVCCSKTALEYLRSAQAQHTTCLRYSSLDLDQIVAKCTSWPSSTQFGYIVQHQDTGAELALTLGGDTTSLPMTSYGRVFPQGEVWIGSTPCSTGLRIDVIALSAVLSQKDAQTMAEEVGAALEKLLGCGYRRLSHLIGNTFAT</sequence>
<feature type="chain" id="PRO_0000424109" description="Nonribosomal peptide synthetase 13">
    <location>
        <begin position="1"/>
        <end position="2211"/>
    </location>
</feature>
<feature type="domain" description="Carrier 1" evidence="2">
    <location>
        <begin position="594"/>
        <end position="671"/>
    </location>
</feature>
<feature type="domain" description="Carrier 2" evidence="2">
    <location>
        <begin position="1677"/>
        <end position="1756"/>
    </location>
</feature>
<feature type="region of interest" description="Adenylation 1" evidence="1 17">
    <location>
        <begin position="76"/>
        <end position="475"/>
    </location>
</feature>
<feature type="region of interest" description="Condensation 1" evidence="1 17">
    <location>
        <begin position="710"/>
        <end position="975"/>
    </location>
</feature>
<feature type="region of interest" description="Adenylation 2" evidence="1 17">
    <location>
        <begin position="1169"/>
        <end position="1563"/>
    </location>
</feature>
<feature type="region of interest" description="Condensation 2" evidence="1 17">
    <location>
        <begin position="1814"/>
        <end position="2069"/>
    </location>
</feature>
<feature type="modified residue" description="O-(pantetheine 4'-phosphoryl)serine" evidence="2">
    <location>
        <position position="631"/>
    </location>
</feature>
<feature type="modified residue" description="O-(pantetheine 4'-phosphoryl)serine" evidence="2">
    <location>
        <position position="1714"/>
    </location>
</feature>
<proteinExistence type="evidence at protein level"/>
<name>FTMA_ASPFM</name>
<reference key="1">
    <citation type="journal article" date="2009" name="ChemBioChem">
        <title>Identification of cytochrome P450s required for fumitremorgin biosynthesis in Aspergillus fumigatus.</title>
        <authorList>
            <person name="Kato N."/>
            <person name="Suzuki H."/>
            <person name="Takagi H."/>
            <person name="Asami Y."/>
            <person name="Kakeya H."/>
            <person name="Uramoto M."/>
            <person name="Usui T."/>
            <person name="Takahashi S."/>
            <person name="Sugimoto Y."/>
            <person name="Osada H."/>
        </authorList>
    </citation>
    <scope>NUCLEOTIDE SEQUENCE [GENOMIC DNA]</scope>
    <scope>FUNCTION</scope>
    <source>
        <strain>BM939</strain>
    </source>
</reference>
<reference key="2">
    <citation type="journal article" date="2005" name="Microbiology">
        <title>Overproduction, purification and characterization of FtmPT1, a brevianamide F prenyltransferase from Aspergillus fumigatus.</title>
        <authorList>
            <person name="Grundmann A."/>
            <person name="Li S.M."/>
        </authorList>
    </citation>
    <scope>FUNCTION</scope>
</reference>
<reference key="3">
    <citation type="journal article" date="2005" name="Mol. Biol. Cell">
        <title>The Aspergillus fumigatus StuA protein governs the up-regulation of a discrete transcriptional program during the acquisition of developmental competence.</title>
        <authorList>
            <person name="Sheppard D.C."/>
            <person name="Doedt T."/>
            <person name="Chiang L.Y."/>
            <person name="Kim H.S."/>
            <person name="Chen D."/>
            <person name="Nierman W.C."/>
            <person name="Filler S.G."/>
        </authorList>
    </citation>
    <scope>INDUCTION</scope>
</reference>
<reference key="4">
    <citation type="journal article" date="2006" name="ChemBioChem">
        <title>The fumitremorgin gene cluster of Aspergillus fumigatus: identification of a gene encoding brevianamide F synthetase.</title>
        <authorList>
            <person name="Maiya S."/>
            <person name="Grundmann A."/>
            <person name="Li S.M."/>
            <person name="Turner G."/>
        </authorList>
    </citation>
    <scope>FUNCTION</scope>
    <scope>CATALYTIC ACTIVITY</scope>
    <scope>PATHWAY</scope>
</reference>
<reference key="5">
    <citation type="journal article" date="2006" name="Gene">
        <title>Phylogenomic analysis of non-ribosomal peptide synthetases in the genus Aspergillus.</title>
        <authorList>
            <person name="Cramer R.A. Jr."/>
            <person name="Stajich J.E."/>
            <person name="Yamanaka Y."/>
            <person name="Dietrich F.S."/>
            <person name="Steinbach W.J."/>
            <person name="Perfect J.R."/>
        </authorList>
    </citation>
    <scope>NOMENCLATURE</scope>
</reference>
<reference key="6">
    <citation type="journal article" date="2007" name="Microbiology">
        <title>Nonribosomal peptide synthesis in Aspergillus fumigatus and other fungi.</title>
        <authorList>
            <person name="Stack D."/>
            <person name="Neville C."/>
            <person name="Doyle S."/>
        </authorList>
    </citation>
    <scope>REVIEW ON FUNCTION</scope>
    <scope>DOMAIN</scope>
</reference>
<reference key="7">
    <citation type="journal article" date="2008" name="ChemBioChem">
        <title>FtmPT2, an N-prenyltransferase from Aspergillus fumigatus, catalyses the last step in the biosynthesis of fumitremorgin B.</title>
        <authorList>
            <person name="Grundmann A."/>
            <person name="Kuznetsova T."/>
            <person name="Afiyatullov S.S."/>
            <person name="Li S.M."/>
        </authorList>
    </citation>
    <scope>FUNCTION</scope>
</reference>
<reference key="8">
    <citation type="journal article" date="2009" name="Org. Biomol. Chem.">
        <title>FtmOx1, a non-heme Fe(II) and alpha-ketoglutarate-dependent dioxygenase, catalyses the endoperoxide formation of verruculogen in Aspergillus fumigatus.</title>
        <authorList>
            <person name="Steffan N."/>
            <person name="Grundmann A."/>
            <person name="Afiyatullov S."/>
            <person name="Ruan H."/>
            <person name="Li S.M."/>
        </authorList>
    </citation>
    <scope>FUNCTION</scope>
</reference>
<reference key="9">
    <citation type="journal article" date="2010" name="J. Am. Chem. Soc.">
        <title>Structure-function analysis of an enzymatic prenyl transfer reaction identifies a reaction chamber with modifiable specificity.</title>
        <authorList>
            <person name="Jost M."/>
            <person name="Zocher G."/>
            <person name="Tarcz S."/>
            <person name="Matuschek M."/>
            <person name="Xie X."/>
            <person name="Li S.M."/>
            <person name="Stehle T."/>
        </authorList>
    </citation>
    <scope>FUNCTION</scope>
</reference>
<reference key="10">
    <citation type="journal article" date="2012" name="Org. Biomol. Chem.">
        <title>Breaking the regioselectivity of indole prenyltransferases: identification of regular C3-prenylated hexahydropyrrolo[2,3-b]indoles as side products of the regular C2-prenyltransferase FtmPT1.</title>
        <authorList>
            <person name="Wollinsky B."/>
            <person name="Ludwig L."/>
            <person name="Xie X."/>
            <person name="Li S.M."/>
        </authorList>
    </citation>
    <scope>FUNCTION</scope>
</reference>
<reference key="11">
    <citation type="journal article" date="2013" name="Biosci. Biotechnol. Biochem.">
        <title>A point mutation in ftmD blocks the fumitremorgin biosynthetic pathway in Aspergillus fumigatus strain Af293.</title>
        <authorList>
            <person name="Kato N."/>
            <person name="Suzuki H."/>
            <person name="Okumura H."/>
            <person name="Takahashi S."/>
            <person name="Osada H."/>
        </authorList>
    </citation>
    <scope>FUNCTION</scope>
    <scope>PATHWAY</scope>
</reference>
<evidence type="ECO:0000255" key="1"/>
<evidence type="ECO:0000255" key="2">
    <source>
        <dbReference type="PROSITE-ProRule" id="PRU00258"/>
    </source>
</evidence>
<evidence type="ECO:0000269" key="3">
    <source>
    </source>
</evidence>
<evidence type="ECO:0000269" key="4">
    <source>
    </source>
</evidence>
<evidence type="ECO:0000269" key="5">
    <source>
    </source>
</evidence>
<evidence type="ECO:0000269" key="6">
    <source>
    </source>
</evidence>
<evidence type="ECO:0000269" key="7">
    <source>
    </source>
</evidence>
<evidence type="ECO:0000269" key="8">
    <source>
    </source>
</evidence>
<evidence type="ECO:0000269" key="9">
    <source>
    </source>
</evidence>
<evidence type="ECO:0000269" key="10">
    <source>
    </source>
</evidence>
<evidence type="ECO:0000269" key="11">
    <source>
    </source>
</evidence>
<evidence type="ECO:0000269" key="12">
    <source>
    </source>
</evidence>
<evidence type="ECO:0000303" key="13">
    <source>
    </source>
</evidence>
<evidence type="ECO:0000303" key="14">
    <source>
    </source>
</evidence>
<evidence type="ECO:0000305" key="15"/>
<evidence type="ECO:0000305" key="16">
    <source>
    </source>
</evidence>
<evidence type="ECO:0000305" key="17">
    <source>
    </source>
</evidence>
<organism>
    <name type="scientific">Aspergillus fumigatus</name>
    <name type="common">Neosartorya fumigata</name>
    <dbReference type="NCBI Taxonomy" id="746128"/>
    <lineage>
        <taxon>Eukaryota</taxon>
        <taxon>Fungi</taxon>
        <taxon>Dikarya</taxon>
        <taxon>Ascomycota</taxon>
        <taxon>Pezizomycotina</taxon>
        <taxon>Eurotiomycetes</taxon>
        <taxon>Eurotiomycetidae</taxon>
        <taxon>Eurotiales</taxon>
        <taxon>Aspergillaceae</taxon>
        <taxon>Aspergillus</taxon>
        <taxon>Aspergillus subgen. Fumigati</taxon>
    </lineage>
</organism>
<comment type="function">
    <text evidence="3 5 6 7 8 9 10 11 12 15 16">Nonribosomal peptide synthetase; part of the gene cluster that mediates the biosynthesis of fumitremorgins, indole alkaloids that carry not only intriguing chemical structures, but also interesting biological and pharmacological activities (PubMed:16755625, PubMed:23649274). The biosynthesis of fumitremorgin-type alkaloids begins by condensation of the two amino acids L-tryptophan and L-proline to brevianamide F, catalyzed by the non-ribosomal peptide synthetase ftmA (PubMed:16755625, PubMed:17464044). Brevianamide F is then prenylated by the prenyltransferase ftmPT1/ftmB in the presence of dimethylallyl diphosphate, resulting in the formation of tryprostatin B (PubMed:16000710, PubMed:21105662, PubMed:23090579). The three cytochrome P450 monooxygenases, ftmP450-1/ftmC, ftmP450-2/ftmE and ftmP450-3/FtmG, are responsible for the conversion of tryprostatin B to 6-hydroxytryprostatin B, tryprostatin A to fumitremorgin C and fumitremorgin C to 12,13-dihydroxyfumitremorgin C, respectively (PubMed:19226505). The putative methyltransferase ftmMT/ftmD is expected for the conversion of 6-hydroxytryprostatin B to tryprostatin A (Probable). FtmPT2/FtmH catalyzes the prenylation of 12,13-dihydroxyfumitre-morgin C in the presence of dimethylallyl diphosphate, resulting in the formation of fumitremorgin B (PubMed:18683158). Fumitremorgin B is further converted to verruculogen by ftmOx1/ftmF via the insertion of an endoperoxide bond between the two prenyl moieties (PubMed:19763315). In some fungal species, verruculogen is further converted to fumitremorgin A, but the enzymes involved in this step have not been identified yet (Probable).</text>
</comment>
<comment type="catalytic activity">
    <reaction evidence="5">
        <text>L-proline + L-tryptophan + 2 ATP = brevianamide F + 2 AMP + 2 diphosphate + 2 H(+)</text>
        <dbReference type="Rhea" id="RHEA:35935"/>
        <dbReference type="ChEBI" id="CHEBI:15378"/>
        <dbReference type="ChEBI" id="CHEBI:30616"/>
        <dbReference type="ChEBI" id="CHEBI:33019"/>
        <dbReference type="ChEBI" id="CHEBI:57912"/>
        <dbReference type="ChEBI" id="CHEBI:60039"/>
        <dbReference type="ChEBI" id="CHEBI:64530"/>
        <dbReference type="ChEBI" id="CHEBI:456215"/>
    </reaction>
</comment>
<comment type="pathway">
    <text evidence="5 12">Mycotoxin biosynthesis.</text>
</comment>
<comment type="induction">
    <text evidence="4">Expression is under the control of StuA, which is responsible for transcriptional activation during acquisition of developmental competence.</text>
</comment>
<comment type="domain">
    <text evidence="17">NRP synthetases are composed of discrete domains (adenylation (A), thiolation (T) or peptidyl carrier protein (PCP) and condensation (C) domains) which when grouped together are referred to as a single module. Each module is responsible for the recognition (via the A domain) and incorporation of a single amino acid into the growing peptide product. Thus, an NRP synthetase is generally composed of one or more modules and can terminate in a thioesterase domain (TE) that releases the newly synthesized peptide from the enzyme. Occasionally, epimerase (E) domains (responsible for l- to d- amino acid conversion) are present within the NRP synthetase. NRPS13 has the following architecture: A-T-C-A-T-C.</text>
</comment>
<comment type="similarity">
    <text evidence="15">Belongs to the NRP synthetase family.</text>
</comment>
<keyword id="KW-0017">Alkaloid metabolism</keyword>
<keyword id="KW-0413">Isomerase</keyword>
<keyword id="KW-0436">Ligase</keyword>
<keyword id="KW-0596">Phosphopantetheine</keyword>
<keyword id="KW-0597">Phosphoprotein</keyword>
<keyword id="KW-0677">Repeat</keyword>
<keyword id="KW-0843">Virulence</keyword>
<protein>
    <recommendedName>
        <fullName evidence="14">Nonribosomal peptide synthetase 13</fullName>
        <ecNumber evidence="5">6.3.3.-</ecNumber>
    </recommendedName>
    <alternativeName>
        <fullName evidence="13">Brevianamide F synthase</fullName>
    </alternativeName>
    <alternativeName>
        <fullName evidence="13">Fumitremorgin biosynthesis protein A</fullName>
    </alternativeName>
</protein>
<accession>B9WZX0</accession>
<gene>
    <name evidence="14" type="primary">NRPS13</name>
    <name evidence="13" type="synonym">ftmA</name>
</gene>
<dbReference type="EC" id="6.3.3.-" evidence="5"/>
<dbReference type="EMBL" id="AB436628">
    <property type="protein sequence ID" value="BAH23995.1"/>
    <property type="molecule type" value="Genomic_DNA"/>
</dbReference>
<dbReference type="SMR" id="B9WZX0"/>
<dbReference type="BioCyc" id="MetaCyc:MONOMER-18761"/>
<dbReference type="GO" id="GO:0005737">
    <property type="term" value="C:cytoplasm"/>
    <property type="evidence" value="ECO:0007669"/>
    <property type="project" value="TreeGrafter"/>
</dbReference>
<dbReference type="GO" id="GO:0016853">
    <property type="term" value="F:isomerase activity"/>
    <property type="evidence" value="ECO:0007669"/>
    <property type="project" value="UniProtKB-KW"/>
</dbReference>
<dbReference type="GO" id="GO:0016874">
    <property type="term" value="F:ligase activity"/>
    <property type="evidence" value="ECO:0007669"/>
    <property type="project" value="UniProtKB-KW"/>
</dbReference>
<dbReference type="GO" id="GO:0031177">
    <property type="term" value="F:phosphopantetheine binding"/>
    <property type="evidence" value="ECO:0007669"/>
    <property type="project" value="TreeGrafter"/>
</dbReference>
<dbReference type="GO" id="GO:0043041">
    <property type="term" value="P:amino acid activation for nonribosomal peptide biosynthetic process"/>
    <property type="evidence" value="ECO:0007669"/>
    <property type="project" value="TreeGrafter"/>
</dbReference>
<dbReference type="GO" id="GO:1902181">
    <property type="term" value="P:verruculogen biosynthetic process"/>
    <property type="evidence" value="ECO:0000314"/>
    <property type="project" value="GO_Central"/>
</dbReference>
<dbReference type="CDD" id="cd05918">
    <property type="entry name" value="A_NRPS_SidN3_like"/>
    <property type="match status" value="2"/>
</dbReference>
<dbReference type="CDD" id="cd19542">
    <property type="entry name" value="CT_NRPS-like"/>
    <property type="match status" value="1"/>
</dbReference>
<dbReference type="CDD" id="cd19545">
    <property type="entry name" value="FUM14_C_NRPS-like"/>
    <property type="match status" value="1"/>
</dbReference>
<dbReference type="FunFam" id="3.40.50.980:FF:000001">
    <property type="entry name" value="Non-ribosomal peptide synthetase"/>
    <property type="match status" value="1"/>
</dbReference>
<dbReference type="FunFam" id="3.30.300.30:FF:000015">
    <property type="entry name" value="Nonribosomal peptide synthase SidD"/>
    <property type="match status" value="2"/>
</dbReference>
<dbReference type="FunFam" id="3.40.50.12780:FF:000014">
    <property type="entry name" value="Nonribosomal peptide synthetase 1"/>
    <property type="match status" value="2"/>
</dbReference>
<dbReference type="FunFam" id="1.10.1200.10:FF:000028">
    <property type="entry name" value="Nonribosomal peptide synthetase 13"/>
    <property type="match status" value="1"/>
</dbReference>
<dbReference type="Gene3D" id="3.30.300.30">
    <property type="match status" value="2"/>
</dbReference>
<dbReference type="Gene3D" id="1.10.1200.10">
    <property type="entry name" value="ACP-like"/>
    <property type="match status" value="2"/>
</dbReference>
<dbReference type="Gene3D" id="3.30.559.10">
    <property type="entry name" value="Chloramphenicol acetyltransferase-like domain"/>
    <property type="match status" value="2"/>
</dbReference>
<dbReference type="Gene3D" id="3.40.50.12780">
    <property type="entry name" value="N-terminal domain of ligase-like"/>
    <property type="match status" value="2"/>
</dbReference>
<dbReference type="Gene3D" id="3.30.559.30">
    <property type="entry name" value="Nonribosomal peptide synthetase, condensation domain"/>
    <property type="match status" value="2"/>
</dbReference>
<dbReference type="InterPro" id="IPR010071">
    <property type="entry name" value="AA_adenyl_dom"/>
</dbReference>
<dbReference type="InterPro" id="IPR036736">
    <property type="entry name" value="ACP-like_sf"/>
</dbReference>
<dbReference type="InterPro" id="IPR045851">
    <property type="entry name" value="AMP-bd_C_sf"/>
</dbReference>
<dbReference type="InterPro" id="IPR020845">
    <property type="entry name" value="AMP-binding_CS"/>
</dbReference>
<dbReference type="InterPro" id="IPR000873">
    <property type="entry name" value="AMP-dep_synth/lig_dom"/>
</dbReference>
<dbReference type="InterPro" id="IPR042099">
    <property type="entry name" value="ANL_N_sf"/>
</dbReference>
<dbReference type="InterPro" id="IPR023213">
    <property type="entry name" value="CAT-like_dom_sf"/>
</dbReference>
<dbReference type="InterPro" id="IPR001242">
    <property type="entry name" value="Condensatn"/>
</dbReference>
<dbReference type="InterPro" id="IPR009081">
    <property type="entry name" value="PP-bd_ACP"/>
</dbReference>
<dbReference type="InterPro" id="IPR006162">
    <property type="entry name" value="Ppantetheine_attach_site"/>
</dbReference>
<dbReference type="NCBIfam" id="TIGR01733">
    <property type="entry name" value="AA-adenyl-dom"/>
    <property type="match status" value="1"/>
</dbReference>
<dbReference type="PANTHER" id="PTHR45527:SF1">
    <property type="entry name" value="FATTY ACID SYNTHASE"/>
    <property type="match status" value="1"/>
</dbReference>
<dbReference type="PANTHER" id="PTHR45527">
    <property type="entry name" value="NONRIBOSOMAL PEPTIDE SYNTHETASE"/>
    <property type="match status" value="1"/>
</dbReference>
<dbReference type="Pfam" id="PF00501">
    <property type="entry name" value="AMP-binding"/>
    <property type="match status" value="2"/>
</dbReference>
<dbReference type="Pfam" id="PF00668">
    <property type="entry name" value="Condensation"/>
    <property type="match status" value="2"/>
</dbReference>
<dbReference type="Pfam" id="PF00550">
    <property type="entry name" value="PP-binding"/>
    <property type="match status" value="2"/>
</dbReference>
<dbReference type="SUPFAM" id="SSF56801">
    <property type="entry name" value="Acetyl-CoA synthetase-like"/>
    <property type="match status" value="2"/>
</dbReference>
<dbReference type="SUPFAM" id="SSF47336">
    <property type="entry name" value="ACP-like"/>
    <property type="match status" value="2"/>
</dbReference>
<dbReference type="SUPFAM" id="SSF52777">
    <property type="entry name" value="CoA-dependent acyltransferases"/>
    <property type="match status" value="4"/>
</dbReference>
<dbReference type="PROSITE" id="PS00455">
    <property type="entry name" value="AMP_BINDING"/>
    <property type="match status" value="2"/>
</dbReference>
<dbReference type="PROSITE" id="PS50075">
    <property type="entry name" value="CARRIER"/>
    <property type="match status" value="2"/>
</dbReference>
<dbReference type="PROSITE" id="PS00012">
    <property type="entry name" value="PHOSPHOPANTETHEINE"/>
    <property type="match status" value="2"/>
</dbReference>